<protein>
    <recommendedName>
        <fullName>Protein HIRA</fullName>
    </recommendedName>
    <alternativeName>
        <fullName>Histone regulator protein</fullName>
    </alternativeName>
</protein>
<accession>Q652L2</accession>
<accession>A0A0P0XR75</accession>
<dbReference type="EMBL" id="AP005546">
    <property type="protein sequence ID" value="BAD46207.1"/>
    <property type="molecule type" value="Genomic_DNA"/>
</dbReference>
<dbReference type="EMBL" id="AP005558">
    <property type="protein sequence ID" value="BAD46255.1"/>
    <property type="molecule type" value="Genomic_DNA"/>
</dbReference>
<dbReference type="EMBL" id="AP008215">
    <property type="protein sequence ID" value="BAF25878.1"/>
    <property type="molecule type" value="Genomic_DNA"/>
</dbReference>
<dbReference type="EMBL" id="AP014965">
    <property type="protein sequence ID" value="BAT09479.1"/>
    <property type="molecule type" value="Genomic_DNA"/>
</dbReference>
<dbReference type="EMBL" id="CM000146">
    <property type="protein sequence ID" value="EAZ45715.1"/>
    <property type="molecule type" value="Genomic_DNA"/>
</dbReference>
<dbReference type="EMBL" id="AK065913">
    <property type="status" value="NOT_ANNOTATED_CDS"/>
    <property type="molecule type" value="mRNA"/>
</dbReference>
<dbReference type="RefSeq" id="XP_015612035.1">
    <property type="nucleotide sequence ID" value="XM_015756549.1"/>
</dbReference>
<dbReference type="SMR" id="Q652L2"/>
<dbReference type="FunCoup" id="Q652L2">
    <property type="interactions" value="1911"/>
</dbReference>
<dbReference type="STRING" id="39947.Q652L2"/>
<dbReference type="PaxDb" id="39947-Q652L2"/>
<dbReference type="EnsemblPlants" id="Os09t0567700-01">
    <property type="protein sequence ID" value="Os09t0567700-01"/>
    <property type="gene ID" value="Os09g0567700"/>
</dbReference>
<dbReference type="Gramene" id="Os09t0567700-01">
    <property type="protein sequence ID" value="Os09t0567700-01"/>
    <property type="gene ID" value="Os09g0567700"/>
</dbReference>
<dbReference type="KEGG" id="dosa:Os09g0567700"/>
<dbReference type="eggNOG" id="KOG0973">
    <property type="taxonomic scope" value="Eukaryota"/>
</dbReference>
<dbReference type="HOGENOM" id="CLU_004372_3_0_1"/>
<dbReference type="InParanoid" id="Q652L2"/>
<dbReference type="OMA" id="RGSWDGD"/>
<dbReference type="OrthoDB" id="1741719at2759"/>
<dbReference type="Proteomes" id="UP000000763">
    <property type="component" value="Chromosome 9"/>
</dbReference>
<dbReference type="Proteomes" id="UP000007752">
    <property type="component" value="Chromosome 9"/>
</dbReference>
<dbReference type="Proteomes" id="UP000059680">
    <property type="component" value="Chromosome 9"/>
</dbReference>
<dbReference type="GO" id="GO:0000785">
    <property type="term" value="C:chromatin"/>
    <property type="evidence" value="ECO:0000318"/>
    <property type="project" value="GO_Central"/>
</dbReference>
<dbReference type="GO" id="GO:0000417">
    <property type="term" value="C:HIR complex"/>
    <property type="evidence" value="ECO:0000318"/>
    <property type="project" value="GO_Central"/>
</dbReference>
<dbReference type="GO" id="GO:0005634">
    <property type="term" value="C:nucleus"/>
    <property type="evidence" value="ECO:0007669"/>
    <property type="project" value="UniProtKB-SubCell"/>
</dbReference>
<dbReference type="GO" id="GO:0006338">
    <property type="term" value="P:chromatin remodeling"/>
    <property type="evidence" value="ECO:0000318"/>
    <property type="project" value="GO_Central"/>
</dbReference>
<dbReference type="GO" id="GO:0006351">
    <property type="term" value="P:DNA-templated transcription"/>
    <property type="evidence" value="ECO:0007669"/>
    <property type="project" value="InterPro"/>
</dbReference>
<dbReference type="GO" id="GO:0006355">
    <property type="term" value="P:regulation of DNA-templated transcription"/>
    <property type="evidence" value="ECO:0007669"/>
    <property type="project" value="InterPro"/>
</dbReference>
<dbReference type="CDD" id="cd00200">
    <property type="entry name" value="WD40"/>
    <property type="match status" value="1"/>
</dbReference>
<dbReference type="FunFam" id="2.130.10.10:FF:000354">
    <property type="entry name" value="Protein HIRA"/>
    <property type="match status" value="1"/>
</dbReference>
<dbReference type="FunFam" id="2.130.10.10:FF:000418">
    <property type="entry name" value="Protein HIRA"/>
    <property type="match status" value="1"/>
</dbReference>
<dbReference type="Gene3D" id="2.130.10.10">
    <property type="entry name" value="YVTN repeat-like/Quinoprotein amine dehydrogenase"/>
    <property type="match status" value="2"/>
</dbReference>
<dbReference type="InterPro" id="IPR055410">
    <property type="entry name" value="CAF1B_HIR1_beta-prop"/>
</dbReference>
<dbReference type="InterPro" id="IPR031120">
    <property type="entry name" value="HIR1-like"/>
</dbReference>
<dbReference type="InterPro" id="IPR011494">
    <property type="entry name" value="HIRA-like_C"/>
</dbReference>
<dbReference type="InterPro" id="IPR015943">
    <property type="entry name" value="WD40/YVTN_repeat-like_dom_sf"/>
</dbReference>
<dbReference type="InterPro" id="IPR036322">
    <property type="entry name" value="WD40_repeat_dom_sf"/>
</dbReference>
<dbReference type="InterPro" id="IPR001680">
    <property type="entry name" value="WD40_rpt"/>
</dbReference>
<dbReference type="PANTHER" id="PTHR13831">
    <property type="entry name" value="MEMBER OF THE HIR1 FAMILY OF WD-REPEAT PROTEINS"/>
    <property type="match status" value="1"/>
</dbReference>
<dbReference type="PANTHER" id="PTHR13831:SF0">
    <property type="entry name" value="PROTEIN HIRA"/>
    <property type="match status" value="1"/>
</dbReference>
<dbReference type="Pfam" id="PF24105">
    <property type="entry name" value="Beta-prop_CAF1B_HIR1"/>
    <property type="match status" value="1"/>
</dbReference>
<dbReference type="Pfam" id="PF07569">
    <property type="entry name" value="Hira"/>
    <property type="match status" value="1"/>
</dbReference>
<dbReference type="SMART" id="SM00320">
    <property type="entry name" value="WD40"/>
    <property type="match status" value="6"/>
</dbReference>
<dbReference type="SUPFAM" id="SSF50978">
    <property type="entry name" value="WD40 repeat-like"/>
    <property type="match status" value="2"/>
</dbReference>
<dbReference type="PROSITE" id="PS50082">
    <property type="entry name" value="WD_REPEATS_2"/>
    <property type="match status" value="4"/>
</dbReference>
<dbReference type="PROSITE" id="PS50294">
    <property type="entry name" value="WD_REPEATS_REGION"/>
    <property type="match status" value="2"/>
</dbReference>
<name>HIRA_ORYSJ</name>
<comment type="function">
    <text evidence="1">Histone chaperone involved in maintining knox genes silencing throughout leaf development.</text>
</comment>
<comment type="subcellular location">
    <subcellularLocation>
        <location evidence="4">Nucleus</location>
    </subcellularLocation>
</comment>
<comment type="similarity">
    <text evidence="4">Belongs to the WD repeat HIR1 family.</text>
</comment>
<comment type="sequence caution" evidence="4">
    <conflict type="frameshift">
        <sequence resource="EMBL" id="AK065913"/>
    </conflict>
</comment>
<proteinExistence type="evidence at transcript level"/>
<evidence type="ECO:0000250" key="1"/>
<evidence type="ECO:0000255" key="2"/>
<evidence type="ECO:0000256" key="3">
    <source>
        <dbReference type="SAM" id="MobiDB-lite"/>
    </source>
</evidence>
<evidence type="ECO:0000305" key="4"/>
<keyword id="KW-0156">Chromatin regulator</keyword>
<keyword id="KW-0175">Coiled coil</keyword>
<keyword id="KW-0539">Nucleus</keyword>
<keyword id="KW-1185">Reference proteome</keyword>
<keyword id="KW-0677">Repeat</keyword>
<keyword id="KW-0678">Repressor</keyword>
<keyword id="KW-0804">Transcription</keyword>
<keyword id="KW-0805">Transcription regulation</keyword>
<keyword id="KW-0853">WD repeat</keyword>
<reference key="1">
    <citation type="journal article" date="2005" name="Nature">
        <title>The map-based sequence of the rice genome.</title>
        <authorList>
            <consortium name="International rice genome sequencing project (IRGSP)"/>
        </authorList>
    </citation>
    <scope>NUCLEOTIDE SEQUENCE [LARGE SCALE GENOMIC DNA]</scope>
    <source>
        <strain>cv. Nipponbare</strain>
    </source>
</reference>
<reference key="2">
    <citation type="journal article" date="2008" name="Nucleic Acids Res.">
        <title>The rice annotation project database (RAP-DB): 2008 update.</title>
        <authorList>
            <consortium name="The rice annotation project (RAP)"/>
        </authorList>
    </citation>
    <scope>GENOME REANNOTATION</scope>
    <source>
        <strain>cv. Nipponbare</strain>
    </source>
</reference>
<reference key="3">
    <citation type="journal article" date="2013" name="Rice">
        <title>Improvement of the Oryza sativa Nipponbare reference genome using next generation sequence and optical map data.</title>
        <authorList>
            <person name="Kawahara Y."/>
            <person name="de la Bastide M."/>
            <person name="Hamilton J.P."/>
            <person name="Kanamori H."/>
            <person name="McCombie W.R."/>
            <person name="Ouyang S."/>
            <person name="Schwartz D.C."/>
            <person name="Tanaka T."/>
            <person name="Wu J."/>
            <person name="Zhou S."/>
            <person name="Childs K.L."/>
            <person name="Davidson R.M."/>
            <person name="Lin H."/>
            <person name="Quesada-Ocampo L."/>
            <person name="Vaillancourt B."/>
            <person name="Sakai H."/>
            <person name="Lee S.S."/>
            <person name="Kim J."/>
            <person name="Numa H."/>
            <person name="Itoh T."/>
            <person name="Buell C.R."/>
            <person name="Matsumoto T."/>
        </authorList>
    </citation>
    <scope>GENOME REANNOTATION</scope>
    <source>
        <strain>cv. Nipponbare</strain>
    </source>
</reference>
<reference key="4">
    <citation type="journal article" date="2005" name="PLoS Biol.">
        <title>The genomes of Oryza sativa: a history of duplications.</title>
        <authorList>
            <person name="Yu J."/>
            <person name="Wang J."/>
            <person name="Lin W."/>
            <person name="Li S."/>
            <person name="Li H."/>
            <person name="Zhou J."/>
            <person name="Ni P."/>
            <person name="Dong W."/>
            <person name="Hu S."/>
            <person name="Zeng C."/>
            <person name="Zhang J."/>
            <person name="Zhang Y."/>
            <person name="Li R."/>
            <person name="Xu Z."/>
            <person name="Li S."/>
            <person name="Li X."/>
            <person name="Zheng H."/>
            <person name="Cong L."/>
            <person name="Lin L."/>
            <person name="Yin J."/>
            <person name="Geng J."/>
            <person name="Li G."/>
            <person name="Shi J."/>
            <person name="Liu J."/>
            <person name="Lv H."/>
            <person name="Li J."/>
            <person name="Wang J."/>
            <person name="Deng Y."/>
            <person name="Ran L."/>
            <person name="Shi X."/>
            <person name="Wang X."/>
            <person name="Wu Q."/>
            <person name="Li C."/>
            <person name="Ren X."/>
            <person name="Wang J."/>
            <person name="Wang X."/>
            <person name="Li D."/>
            <person name="Liu D."/>
            <person name="Zhang X."/>
            <person name="Ji Z."/>
            <person name="Zhao W."/>
            <person name="Sun Y."/>
            <person name="Zhang Z."/>
            <person name="Bao J."/>
            <person name="Han Y."/>
            <person name="Dong L."/>
            <person name="Ji J."/>
            <person name="Chen P."/>
            <person name="Wu S."/>
            <person name="Liu J."/>
            <person name="Xiao Y."/>
            <person name="Bu D."/>
            <person name="Tan J."/>
            <person name="Yang L."/>
            <person name="Ye C."/>
            <person name="Zhang J."/>
            <person name="Xu J."/>
            <person name="Zhou Y."/>
            <person name="Yu Y."/>
            <person name="Zhang B."/>
            <person name="Zhuang S."/>
            <person name="Wei H."/>
            <person name="Liu B."/>
            <person name="Lei M."/>
            <person name="Yu H."/>
            <person name="Li Y."/>
            <person name="Xu H."/>
            <person name="Wei S."/>
            <person name="He X."/>
            <person name="Fang L."/>
            <person name="Zhang Z."/>
            <person name="Zhang Y."/>
            <person name="Huang X."/>
            <person name="Su Z."/>
            <person name="Tong W."/>
            <person name="Li J."/>
            <person name="Tong Z."/>
            <person name="Li S."/>
            <person name="Ye J."/>
            <person name="Wang L."/>
            <person name="Fang L."/>
            <person name="Lei T."/>
            <person name="Chen C.-S."/>
            <person name="Chen H.-C."/>
            <person name="Xu Z."/>
            <person name="Li H."/>
            <person name="Huang H."/>
            <person name="Zhang F."/>
            <person name="Xu H."/>
            <person name="Li N."/>
            <person name="Zhao C."/>
            <person name="Li S."/>
            <person name="Dong L."/>
            <person name="Huang Y."/>
            <person name="Li L."/>
            <person name="Xi Y."/>
            <person name="Qi Q."/>
            <person name="Li W."/>
            <person name="Zhang B."/>
            <person name="Hu W."/>
            <person name="Zhang Y."/>
            <person name="Tian X."/>
            <person name="Jiao Y."/>
            <person name="Liang X."/>
            <person name="Jin J."/>
            <person name="Gao L."/>
            <person name="Zheng W."/>
            <person name="Hao B."/>
            <person name="Liu S.-M."/>
            <person name="Wang W."/>
            <person name="Yuan L."/>
            <person name="Cao M."/>
            <person name="McDermott J."/>
            <person name="Samudrala R."/>
            <person name="Wang J."/>
            <person name="Wong G.K.-S."/>
            <person name="Yang H."/>
        </authorList>
    </citation>
    <scope>NUCLEOTIDE SEQUENCE [LARGE SCALE GENOMIC DNA]</scope>
    <source>
        <strain>cv. Nipponbare</strain>
    </source>
</reference>
<reference key="5">
    <citation type="journal article" date="2003" name="Science">
        <title>Collection, mapping, and annotation of over 28,000 cDNA clones from japonica rice.</title>
        <authorList>
            <consortium name="The rice full-length cDNA consortium"/>
        </authorList>
    </citation>
    <scope>NUCLEOTIDE SEQUENCE [LARGE SCALE MRNA]</scope>
    <source>
        <strain>cv. Nipponbare</strain>
    </source>
</reference>
<sequence>MITEKPSWIRHEGLQIFSIDIQPGGIRFATGGGDQKIRIWSMKSVAKDNDSDDSSQRLLATIRDHFGTVNCVRWAHHGRYLASGSDDQVIQIHERKAGTGTSEFGSGEPPDVENWKVVMTLRGHTADVVDLNWSPDDSTLASGSLDNTVHIWSMANGICTAVLRGHSSLVKGVTWDPIGSFIASQSDDKTVIIWRTSDWSLAHRTEGHWSKSLGSTFFRRLAWSPCGHFITTTHGFQKPRHSAPVLERGEWSATFDFLGHNAPVVVVKFNHSMFRKHLSSGQDAKAAPAGWANGASKASSKEHQPYNVIAIGSQDRTITVWTTASARPLFVAKHFFTQSVVDLSWSPDGYSLFACSLDGSVATFHFEAKELGYRLRDAELDELKKNRYGDVRGRQSNIAESPAQLLLEEASAKQSASKKVSSVQQFQSPPKVSTDAPNPSTSVPNQKAPEALPEDEKKTAGSTADDINKAPRLSSPVKQREYRRPDGRKRIIPEAVGFPSNQDMSNRSQNQGVDFSSLDQRMILGENGTRPSYSASGNCNNCGVRERSGITARTNISESLVIQKASAGAGSDGRLSIEQSGSVVPGSLASCSSLSIHVFNKKDNEDSLPVRLEAKPVERSAGDMIGLGGAFSTKETEITCTRGTETLWSDRISAKVTVLAGNANFWAVGCEDGCLQVYTKCGRRAMPAMMMGSAAVFIDCDECWKLLLVTRRGLMYIWDLYTRTCVLHDSLASLVTSPDEAAGKDTGTVKVISAKFSRCGSPLVVLASRHAFLYDTSLKCWLRIADDCFPASNFASSFSSTQGGELGKLQIDIGKFMARKPIWSRVTDDGVQTRSHLETQLAASLALKSPQEYRQCLLSYIRFLAREADESRLREVCESFLGPPMGMVDAASSADLKNPSWDPDVLGMKKHKLLREDILPSMATNRKVQRLLNEFMDLLSEYEAAETNVEQMDVTPTPPPPPPAAATEGNNNGAS</sequence>
<feature type="chain" id="PRO_0000299134" description="Protein HIRA">
    <location>
        <begin position="1"/>
        <end position="975"/>
    </location>
</feature>
<feature type="repeat" description="WD 1">
    <location>
        <begin position="10"/>
        <end position="50"/>
    </location>
</feature>
<feature type="repeat" description="WD 2">
    <location>
        <begin position="64"/>
        <end position="103"/>
    </location>
</feature>
<feature type="repeat" description="WD 3">
    <location>
        <begin position="123"/>
        <end position="162"/>
    </location>
</feature>
<feature type="repeat" description="WD 4">
    <location>
        <begin position="165"/>
        <end position="204"/>
    </location>
</feature>
<feature type="repeat" description="WD 5">
    <location>
        <begin position="214"/>
        <end position="256"/>
    </location>
</feature>
<feature type="repeat" description="WD 6">
    <location>
        <begin position="259"/>
        <end position="331"/>
    </location>
</feature>
<feature type="repeat" description="WD 7">
    <location>
        <begin position="335"/>
        <end position="374"/>
    </location>
</feature>
<feature type="region of interest" description="Disordered" evidence="3">
    <location>
        <begin position="418"/>
        <end position="510"/>
    </location>
</feature>
<feature type="region of interest" description="Disordered" evidence="3">
    <location>
        <begin position="948"/>
        <end position="975"/>
    </location>
</feature>
<feature type="coiled-coil region" evidence="2">
    <location>
        <begin position="923"/>
        <end position="954"/>
    </location>
</feature>
<feature type="compositionally biased region" description="Low complexity" evidence="3">
    <location>
        <begin position="418"/>
        <end position="433"/>
    </location>
</feature>
<feature type="compositionally biased region" description="Polar residues" evidence="3">
    <location>
        <begin position="435"/>
        <end position="445"/>
    </location>
</feature>
<feature type="compositionally biased region" description="Basic and acidic residues" evidence="3">
    <location>
        <begin position="478"/>
        <end position="492"/>
    </location>
</feature>
<feature type="compositionally biased region" description="Polar residues" evidence="3">
    <location>
        <begin position="499"/>
        <end position="510"/>
    </location>
</feature>
<organism>
    <name type="scientific">Oryza sativa subsp. japonica</name>
    <name type="common">Rice</name>
    <dbReference type="NCBI Taxonomy" id="39947"/>
    <lineage>
        <taxon>Eukaryota</taxon>
        <taxon>Viridiplantae</taxon>
        <taxon>Streptophyta</taxon>
        <taxon>Embryophyta</taxon>
        <taxon>Tracheophyta</taxon>
        <taxon>Spermatophyta</taxon>
        <taxon>Magnoliopsida</taxon>
        <taxon>Liliopsida</taxon>
        <taxon>Poales</taxon>
        <taxon>Poaceae</taxon>
        <taxon>BOP clade</taxon>
        <taxon>Oryzoideae</taxon>
        <taxon>Oryzeae</taxon>
        <taxon>Oryzinae</taxon>
        <taxon>Oryza</taxon>
        <taxon>Oryza sativa</taxon>
    </lineage>
</organism>
<gene>
    <name type="ordered locus">Os09g0567700</name>
    <name type="ordered locus">LOC_Os09g39420</name>
    <name type="ORF">OJ1003_C09.2</name>
    <name type="ORF">OJ1155_H10.34</name>
    <name type="ORF">OsJ_029198</name>
</gene>